<evidence type="ECO:0000255" key="1">
    <source>
        <dbReference type="HAMAP-Rule" id="MF_00086"/>
    </source>
</evidence>
<protein>
    <recommendedName>
        <fullName evidence="1">S-adenosylmethionine synthase</fullName>
        <shortName evidence="1">AdoMet synthase</shortName>
        <ecNumber evidence="1">2.5.1.6</ecNumber>
    </recommendedName>
    <alternativeName>
        <fullName evidence="1">MAT</fullName>
    </alternativeName>
    <alternativeName>
        <fullName evidence="1">Methionine adenosyltransferase</fullName>
    </alternativeName>
</protein>
<feature type="chain" id="PRO_0000302980" description="S-adenosylmethionine synthase">
    <location>
        <begin position="1"/>
        <end position="383"/>
    </location>
</feature>
<feature type="region of interest" description="Flexible loop" evidence="1">
    <location>
        <begin position="99"/>
        <end position="109"/>
    </location>
</feature>
<feature type="binding site" description="in other chain" evidence="1">
    <location>
        <position position="15"/>
    </location>
    <ligand>
        <name>ATP</name>
        <dbReference type="ChEBI" id="CHEBI:30616"/>
        <note>ligand shared between two neighboring subunits</note>
    </ligand>
</feature>
<feature type="binding site" evidence="1">
    <location>
        <position position="17"/>
    </location>
    <ligand>
        <name>Mg(2+)</name>
        <dbReference type="ChEBI" id="CHEBI:18420"/>
    </ligand>
</feature>
<feature type="binding site" evidence="1">
    <location>
        <position position="43"/>
    </location>
    <ligand>
        <name>K(+)</name>
        <dbReference type="ChEBI" id="CHEBI:29103"/>
    </ligand>
</feature>
<feature type="binding site" description="in other chain" evidence="1">
    <location>
        <position position="56"/>
    </location>
    <ligand>
        <name>L-methionine</name>
        <dbReference type="ChEBI" id="CHEBI:57844"/>
        <note>ligand shared between two neighboring subunits</note>
    </ligand>
</feature>
<feature type="binding site" description="in other chain" evidence="1">
    <location>
        <position position="99"/>
    </location>
    <ligand>
        <name>L-methionine</name>
        <dbReference type="ChEBI" id="CHEBI:57844"/>
        <note>ligand shared between two neighboring subunits</note>
    </ligand>
</feature>
<feature type="binding site" description="in other chain" evidence="1">
    <location>
        <begin position="164"/>
        <end position="166"/>
    </location>
    <ligand>
        <name>ATP</name>
        <dbReference type="ChEBI" id="CHEBI:30616"/>
        <note>ligand shared between two neighboring subunits</note>
    </ligand>
</feature>
<feature type="binding site" description="in other chain" evidence="1">
    <location>
        <begin position="230"/>
        <end position="231"/>
    </location>
    <ligand>
        <name>ATP</name>
        <dbReference type="ChEBI" id="CHEBI:30616"/>
        <note>ligand shared between two neighboring subunits</note>
    </ligand>
</feature>
<feature type="binding site" evidence="1">
    <location>
        <position position="239"/>
    </location>
    <ligand>
        <name>ATP</name>
        <dbReference type="ChEBI" id="CHEBI:30616"/>
        <note>ligand shared between two neighboring subunits</note>
    </ligand>
</feature>
<feature type="binding site" evidence="1">
    <location>
        <position position="239"/>
    </location>
    <ligand>
        <name>L-methionine</name>
        <dbReference type="ChEBI" id="CHEBI:57844"/>
        <note>ligand shared between two neighboring subunits</note>
    </ligand>
</feature>
<feature type="binding site" description="in other chain" evidence="1">
    <location>
        <begin position="245"/>
        <end position="246"/>
    </location>
    <ligand>
        <name>ATP</name>
        <dbReference type="ChEBI" id="CHEBI:30616"/>
        <note>ligand shared between two neighboring subunits</note>
    </ligand>
</feature>
<feature type="binding site" evidence="1">
    <location>
        <position position="262"/>
    </location>
    <ligand>
        <name>ATP</name>
        <dbReference type="ChEBI" id="CHEBI:30616"/>
        <note>ligand shared between two neighboring subunits</note>
    </ligand>
</feature>
<feature type="binding site" evidence="1">
    <location>
        <position position="266"/>
    </location>
    <ligand>
        <name>ATP</name>
        <dbReference type="ChEBI" id="CHEBI:30616"/>
        <note>ligand shared between two neighboring subunits</note>
    </ligand>
</feature>
<feature type="binding site" description="in other chain" evidence="1">
    <location>
        <position position="270"/>
    </location>
    <ligand>
        <name>L-methionine</name>
        <dbReference type="ChEBI" id="CHEBI:57844"/>
        <note>ligand shared between two neighboring subunits</note>
    </ligand>
</feature>
<dbReference type="EC" id="2.5.1.6" evidence="1"/>
<dbReference type="EMBL" id="CP000444">
    <property type="protein sequence ID" value="ABI44234.1"/>
    <property type="molecule type" value="Genomic_DNA"/>
</dbReference>
<dbReference type="SMR" id="Q0HRM1"/>
<dbReference type="KEGG" id="shm:Shewmr7_3251"/>
<dbReference type="HOGENOM" id="CLU_041802_1_1_6"/>
<dbReference type="UniPathway" id="UPA00315">
    <property type="reaction ID" value="UER00080"/>
</dbReference>
<dbReference type="GO" id="GO:0005737">
    <property type="term" value="C:cytoplasm"/>
    <property type="evidence" value="ECO:0007669"/>
    <property type="project" value="UniProtKB-SubCell"/>
</dbReference>
<dbReference type="GO" id="GO:0005524">
    <property type="term" value="F:ATP binding"/>
    <property type="evidence" value="ECO:0007669"/>
    <property type="project" value="UniProtKB-UniRule"/>
</dbReference>
<dbReference type="GO" id="GO:0000287">
    <property type="term" value="F:magnesium ion binding"/>
    <property type="evidence" value="ECO:0007669"/>
    <property type="project" value="UniProtKB-UniRule"/>
</dbReference>
<dbReference type="GO" id="GO:0004478">
    <property type="term" value="F:methionine adenosyltransferase activity"/>
    <property type="evidence" value="ECO:0007669"/>
    <property type="project" value="UniProtKB-UniRule"/>
</dbReference>
<dbReference type="GO" id="GO:0006730">
    <property type="term" value="P:one-carbon metabolic process"/>
    <property type="evidence" value="ECO:0007669"/>
    <property type="project" value="UniProtKB-KW"/>
</dbReference>
<dbReference type="GO" id="GO:0006556">
    <property type="term" value="P:S-adenosylmethionine biosynthetic process"/>
    <property type="evidence" value="ECO:0007669"/>
    <property type="project" value="UniProtKB-UniRule"/>
</dbReference>
<dbReference type="CDD" id="cd18079">
    <property type="entry name" value="S-AdoMet_synt"/>
    <property type="match status" value="1"/>
</dbReference>
<dbReference type="FunFam" id="3.30.300.10:FF:000001">
    <property type="entry name" value="S-adenosylmethionine synthase"/>
    <property type="match status" value="1"/>
</dbReference>
<dbReference type="FunFam" id="3.30.300.10:FF:000003">
    <property type="entry name" value="S-adenosylmethionine synthase"/>
    <property type="match status" value="1"/>
</dbReference>
<dbReference type="FunFam" id="3.30.300.10:FF:000004">
    <property type="entry name" value="S-adenosylmethionine synthase"/>
    <property type="match status" value="1"/>
</dbReference>
<dbReference type="Gene3D" id="3.30.300.10">
    <property type="match status" value="3"/>
</dbReference>
<dbReference type="HAMAP" id="MF_00086">
    <property type="entry name" value="S_AdoMet_synth1"/>
    <property type="match status" value="1"/>
</dbReference>
<dbReference type="InterPro" id="IPR022631">
    <property type="entry name" value="ADOMET_SYNTHASE_CS"/>
</dbReference>
<dbReference type="InterPro" id="IPR022630">
    <property type="entry name" value="S-AdoMet_synt_C"/>
</dbReference>
<dbReference type="InterPro" id="IPR022629">
    <property type="entry name" value="S-AdoMet_synt_central"/>
</dbReference>
<dbReference type="InterPro" id="IPR022628">
    <property type="entry name" value="S-AdoMet_synt_N"/>
</dbReference>
<dbReference type="InterPro" id="IPR002133">
    <property type="entry name" value="S-AdoMet_synthetase"/>
</dbReference>
<dbReference type="InterPro" id="IPR022636">
    <property type="entry name" value="S-AdoMet_synthetase_sfam"/>
</dbReference>
<dbReference type="NCBIfam" id="TIGR01034">
    <property type="entry name" value="metK"/>
    <property type="match status" value="1"/>
</dbReference>
<dbReference type="PANTHER" id="PTHR11964">
    <property type="entry name" value="S-ADENOSYLMETHIONINE SYNTHETASE"/>
    <property type="match status" value="1"/>
</dbReference>
<dbReference type="Pfam" id="PF02773">
    <property type="entry name" value="S-AdoMet_synt_C"/>
    <property type="match status" value="1"/>
</dbReference>
<dbReference type="Pfam" id="PF02772">
    <property type="entry name" value="S-AdoMet_synt_M"/>
    <property type="match status" value="1"/>
</dbReference>
<dbReference type="Pfam" id="PF00438">
    <property type="entry name" value="S-AdoMet_synt_N"/>
    <property type="match status" value="1"/>
</dbReference>
<dbReference type="PIRSF" id="PIRSF000497">
    <property type="entry name" value="MAT"/>
    <property type="match status" value="1"/>
</dbReference>
<dbReference type="SUPFAM" id="SSF55973">
    <property type="entry name" value="S-adenosylmethionine synthetase"/>
    <property type="match status" value="3"/>
</dbReference>
<dbReference type="PROSITE" id="PS00376">
    <property type="entry name" value="ADOMET_SYNTHASE_1"/>
    <property type="match status" value="1"/>
</dbReference>
<dbReference type="PROSITE" id="PS00377">
    <property type="entry name" value="ADOMET_SYNTHASE_2"/>
    <property type="match status" value="1"/>
</dbReference>
<comment type="function">
    <text evidence="1">Catalyzes the formation of S-adenosylmethionine (AdoMet) from methionine and ATP. The overall synthetic reaction is composed of two sequential steps, AdoMet formation and the subsequent tripolyphosphate hydrolysis which occurs prior to release of AdoMet from the enzyme.</text>
</comment>
<comment type="catalytic activity">
    <reaction evidence="1">
        <text>L-methionine + ATP + H2O = S-adenosyl-L-methionine + phosphate + diphosphate</text>
        <dbReference type="Rhea" id="RHEA:21080"/>
        <dbReference type="ChEBI" id="CHEBI:15377"/>
        <dbReference type="ChEBI" id="CHEBI:30616"/>
        <dbReference type="ChEBI" id="CHEBI:33019"/>
        <dbReference type="ChEBI" id="CHEBI:43474"/>
        <dbReference type="ChEBI" id="CHEBI:57844"/>
        <dbReference type="ChEBI" id="CHEBI:59789"/>
        <dbReference type="EC" id="2.5.1.6"/>
    </reaction>
</comment>
<comment type="cofactor">
    <cofactor evidence="1">
        <name>Mg(2+)</name>
        <dbReference type="ChEBI" id="CHEBI:18420"/>
    </cofactor>
    <text evidence="1">Binds 2 divalent ions per subunit.</text>
</comment>
<comment type="cofactor">
    <cofactor evidence="1">
        <name>K(+)</name>
        <dbReference type="ChEBI" id="CHEBI:29103"/>
    </cofactor>
    <text evidence="1">Binds 1 potassium ion per subunit.</text>
</comment>
<comment type="pathway">
    <text evidence="1">Amino-acid biosynthesis; S-adenosyl-L-methionine biosynthesis; S-adenosyl-L-methionine from L-methionine: step 1/1.</text>
</comment>
<comment type="subunit">
    <text evidence="1">Homotetramer; dimer of dimers.</text>
</comment>
<comment type="subcellular location">
    <subcellularLocation>
        <location evidence="1">Cytoplasm</location>
    </subcellularLocation>
</comment>
<comment type="similarity">
    <text evidence="1">Belongs to the AdoMet synthase family.</text>
</comment>
<accession>Q0HRM1</accession>
<reference key="1">
    <citation type="submission" date="2006-08" db="EMBL/GenBank/DDBJ databases">
        <title>Complete sequence of chromosome 1 of Shewanella sp. MR-7.</title>
        <authorList>
            <person name="Copeland A."/>
            <person name="Lucas S."/>
            <person name="Lapidus A."/>
            <person name="Barry K."/>
            <person name="Detter J.C."/>
            <person name="Glavina del Rio T."/>
            <person name="Hammon N."/>
            <person name="Israni S."/>
            <person name="Dalin E."/>
            <person name="Tice H."/>
            <person name="Pitluck S."/>
            <person name="Kiss H."/>
            <person name="Brettin T."/>
            <person name="Bruce D."/>
            <person name="Han C."/>
            <person name="Tapia R."/>
            <person name="Gilna P."/>
            <person name="Schmutz J."/>
            <person name="Larimer F."/>
            <person name="Land M."/>
            <person name="Hauser L."/>
            <person name="Kyrpides N."/>
            <person name="Mikhailova N."/>
            <person name="Nealson K."/>
            <person name="Konstantinidis K."/>
            <person name="Klappenbach J."/>
            <person name="Tiedje J."/>
            <person name="Richardson P."/>
        </authorList>
    </citation>
    <scope>NUCLEOTIDE SEQUENCE [LARGE SCALE GENOMIC DNA]</scope>
    <source>
        <strain>MR-7</strain>
    </source>
</reference>
<sequence>MAKHLFTSESVSEGHPDKIADQISDAVLDAILAQDPKARVACETYVKTGMVLVGGEVTTSAWVDIEELTRKTVREIGYVHSDMGFDADSCAVLNAIGKQSPDINQGVDRADPKEQGAGDQGLMFGYASNETDILMPAPITYAHALVKRQSEVRKDGTLPWLRPDAKSQVTFAYEDNKIVGIDAIVLSTQHSPDIAQADLIEGVMETIIKPVLPAQWLNKDTKYFINPTGRFVIGGPMGDCGLTGRKIIVDTYGGMARHGGGAFSGKDPSKVDRSAAYAARYVAKNIVAAGLADRCEIQVSYAIGVAEPTSISVETFGTGKVSEEVLIKLVRQHFDLRPYGLTEMLNLARPIYQATAAYGHFGRNEFPWEATDKADALRADAGL</sequence>
<keyword id="KW-0067">ATP-binding</keyword>
<keyword id="KW-0963">Cytoplasm</keyword>
<keyword id="KW-0460">Magnesium</keyword>
<keyword id="KW-0479">Metal-binding</keyword>
<keyword id="KW-0547">Nucleotide-binding</keyword>
<keyword id="KW-0554">One-carbon metabolism</keyword>
<keyword id="KW-0630">Potassium</keyword>
<keyword id="KW-0808">Transferase</keyword>
<name>METK_SHESR</name>
<proteinExistence type="inferred from homology"/>
<organism>
    <name type="scientific">Shewanella sp. (strain MR-7)</name>
    <dbReference type="NCBI Taxonomy" id="60481"/>
    <lineage>
        <taxon>Bacteria</taxon>
        <taxon>Pseudomonadati</taxon>
        <taxon>Pseudomonadota</taxon>
        <taxon>Gammaproteobacteria</taxon>
        <taxon>Alteromonadales</taxon>
        <taxon>Shewanellaceae</taxon>
        <taxon>Shewanella</taxon>
    </lineage>
</organism>
<gene>
    <name evidence="1" type="primary">metK</name>
    <name type="ordered locus">Shewmr7_3251</name>
</gene>